<feature type="signal peptide" evidence="2">
    <location>
        <begin position="1"/>
        <end position="28"/>
    </location>
</feature>
<feature type="chain" id="PRO_0000007056" description="Defensin-like protein">
    <location>
        <begin position="29"/>
        <end position="74"/>
    </location>
</feature>
<feature type="disulfide bond" evidence="1">
    <location>
        <begin position="31"/>
        <end position="74"/>
    </location>
</feature>
<feature type="disulfide bond" evidence="1">
    <location>
        <begin position="42"/>
        <end position="62"/>
    </location>
</feature>
<feature type="disulfide bond" evidence="1">
    <location>
        <begin position="48"/>
        <end position="68"/>
    </location>
</feature>
<feature type="disulfide bond" evidence="1">
    <location>
        <begin position="52"/>
        <end position="70"/>
    </location>
</feature>
<dbReference type="EMBL" id="Z13956">
    <property type="protein sequence ID" value="CAA78359.1"/>
    <property type="molecule type" value="mRNA"/>
</dbReference>
<dbReference type="PIR" id="S24965">
    <property type="entry name" value="S24965"/>
</dbReference>
<dbReference type="SMR" id="Q07502"/>
<dbReference type="PaxDb" id="3847-GLYMA06G16800.2"/>
<dbReference type="eggNOG" id="ENOG502S7BC">
    <property type="taxonomic scope" value="Eukaryota"/>
</dbReference>
<dbReference type="InParanoid" id="Q07502"/>
<dbReference type="Proteomes" id="UP000008827">
    <property type="component" value="Unplaced"/>
</dbReference>
<dbReference type="GO" id="GO:0005576">
    <property type="term" value="C:extracellular region"/>
    <property type="evidence" value="ECO:0007669"/>
    <property type="project" value="UniProtKB-SubCell"/>
</dbReference>
<dbReference type="GO" id="GO:0006952">
    <property type="term" value="P:defense response"/>
    <property type="evidence" value="ECO:0000318"/>
    <property type="project" value="GO_Central"/>
</dbReference>
<dbReference type="GO" id="GO:0050832">
    <property type="term" value="P:defense response to fungus"/>
    <property type="evidence" value="ECO:0007669"/>
    <property type="project" value="UniProtKB-KW"/>
</dbReference>
<dbReference type="GO" id="GO:0031640">
    <property type="term" value="P:killing of cells of another organism"/>
    <property type="evidence" value="ECO:0007669"/>
    <property type="project" value="UniProtKB-KW"/>
</dbReference>
<dbReference type="CDD" id="cd00107">
    <property type="entry name" value="Knot1"/>
    <property type="match status" value="1"/>
</dbReference>
<dbReference type="Gene3D" id="3.30.30.10">
    <property type="entry name" value="Knottin, scorpion toxin-like"/>
    <property type="match status" value="1"/>
</dbReference>
<dbReference type="InterPro" id="IPR008176">
    <property type="entry name" value="Defensin_plant"/>
</dbReference>
<dbReference type="InterPro" id="IPR003614">
    <property type="entry name" value="Scorpion_toxin-like"/>
</dbReference>
<dbReference type="InterPro" id="IPR036574">
    <property type="entry name" value="Scorpion_toxin-like_sf"/>
</dbReference>
<dbReference type="PANTHER" id="PTHR33147">
    <property type="entry name" value="DEFENSIN-LIKE PROTEIN 1"/>
    <property type="match status" value="1"/>
</dbReference>
<dbReference type="PANTHER" id="PTHR33147:SF133">
    <property type="entry name" value="DEFENSIN-LIKE PROTEIN 6-RELATED"/>
    <property type="match status" value="1"/>
</dbReference>
<dbReference type="Pfam" id="PF00304">
    <property type="entry name" value="Gamma-thionin"/>
    <property type="match status" value="1"/>
</dbReference>
<dbReference type="PRINTS" id="PR00288">
    <property type="entry name" value="PUROTHIONIN"/>
</dbReference>
<dbReference type="SMART" id="SM00505">
    <property type="entry name" value="Knot1"/>
    <property type="match status" value="1"/>
</dbReference>
<dbReference type="SUPFAM" id="SSF57095">
    <property type="entry name" value="Scorpion toxin-like"/>
    <property type="match status" value="1"/>
</dbReference>
<dbReference type="PROSITE" id="PS00940">
    <property type="entry name" value="GAMMA_THIONIN"/>
    <property type="match status" value="1"/>
</dbReference>
<name>DEF_SOYBN</name>
<comment type="subcellular location">
    <subcellularLocation>
        <location evidence="1">Secreted</location>
    </subcellularLocation>
</comment>
<comment type="similarity">
    <text evidence="3">Belongs to the DEFL family. Protease inhibitor I18 (RTI/MTI-2) subfamily.</text>
</comment>
<reference key="1">
    <citation type="journal article" date="1993" name="Plant Physiol.">
        <title>Nucleotide sequence of a cDNA encoding a low molecular weight sulfur-rich protein in soybean seeds.</title>
        <authorList>
            <person name="Choi Y."/>
            <person name="Choi Y.D."/>
            <person name="Lee J.S."/>
        </authorList>
    </citation>
    <scope>NUCLEOTIDE SEQUENCE [MRNA]</scope>
    <source>
        <strain>cv. Paldal</strain>
        <tissue>Seed</tissue>
    </source>
</reference>
<evidence type="ECO:0000250" key="1"/>
<evidence type="ECO:0000255" key="2"/>
<evidence type="ECO:0000305" key="3"/>
<organism>
    <name type="scientific">Glycine max</name>
    <name type="common">Soybean</name>
    <name type="synonym">Glycine hispida</name>
    <dbReference type="NCBI Taxonomy" id="3847"/>
    <lineage>
        <taxon>Eukaryota</taxon>
        <taxon>Viridiplantae</taxon>
        <taxon>Streptophyta</taxon>
        <taxon>Embryophyta</taxon>
        <taxon>Tracheophyta</taxon>
        <taxon>Spermatophyta</taxon>
        <taxon>Magnoliopsida</taxon>
        <taxon>eudicotyledons</taxon>
        <taxon>Gunneridae</taxon>
        <taxon>Pentapetalae</taxon>
        <taxon>rosids</taxon>
        <taxon>fabids</taxon>
        <taxon>Fabales</taxon>
        <taxon>Fabaceae</taxon>
        <taxon>Papilionoideae</taxon>
        <taxon>50 kb inversion clade</taxon>
        <taxon>NPAAA clade</taxon>
        <taxon>indigoferoid/millettioid clade</taxon>
        <taxon>Phaseoleae</taxon>
        <taxon>Glycine</taxon>
        <taxon>Glycine subgen. Soja</taxon>
    </lineage>
</organism>
<protein>
    <recommendedName>
        <fullName>Defensin-like protein</fullName>
    </recommendedName>
    <alternativeName>
        <fullName>8.4 kDa sulfur-rich protein</fullName>
    </alternativeName>
    <alternativeName>
        <fullName>Probable proteinase inhibitor P322</fullName>
    </alternativeName>
    <alternativeName>
        <fullName>Protein SE60</fullName>
    </alternativeName>
</protein>
<accession>Q07502</accession>
<keyword id="KW-0929">Antimicrobial</keyword>
<keyword id="KW-1015">Disulfide bond</keyword>
<keyword id="KW-0295">Fungicide</keyword>
<keyword id="KW-0611">Plant defense</keyword>
<keyword id="KW-1185">Reference proteome</keyword>
<keyword id="KW-0964">Secreted</keyword>
<keyword id="KW-0732">Signal</keyword>
<proteinExistence type="inferred from homology"/>
<sequence length="74" mass="8437">MEMRKSCGFFFLLLLLVFASQVVVQTEGRVCESQSHGFHGLCNRDHNCALVCRNEGFSGGRCKRSRRCFCTRIC</sequence>